<proteinExistence type="inferred from homology"/>
<accession>Q8ZFQ3</accession>
<accession>Q0WGD7</accession>
<sequence length="208" mass="23543">MNKFSVKNHKVNRFSTKAQARQSPPAAPRRVLLFNKPFDVLPQFTDESGRTTLQGFIPFKDVYAAGRLDRDSEGLLVLTNDGKLQARLTQPAQKTGKVYFVQVEGVPDNDALTQLKRGVTLKDGLTLPAGAELVAEPEWLWPRHPPIRERKTIPTSWLKITLYEGRNRQVRRMTAHVGFPTLRLIRFSMGNLSLGNLQPGEWKEITDV</sequence>
<comment type="function">
    <text evidence="1">Responsible for synthesis of pseudouridine from uracil-2457 in 23S ribosomal RNA.</text>
</comment>
<comment type="catalytic activity">
    <reaction>
        <text>uridine(2457) in 23S rRNA = pseudouridine(2457) in 23S rRNA</text>
        <dbReference type="Rhea" id="RHEA:38871"/>
        <dbReference type="Rhea" id="RHEA-COMP:10091"/>
        <dbReference type="Rhea" id="RHEA-COMP:10092"/>
        <dbReference type="ChEBI" id="CHEBI:65314"/>
        <dbReference type="ChEBI" id="CHEBI:65315"/>
        <dbReference type="EC" id="5.4.99.20"/>
    </reaction>
</comment>
<comment type="similarity">
    <text evidence="3">Belongs to the pseudouridine synthase RsuA family.</text>
</comment>
<evidence type="ECO:0000250" key="1"/>
<evidence type="ECO:0000256" key="2">
    <source>
        <dbReference type="SAM" id="MobiDB-lite"/>
    </source>
</evidence>
<evidence type="ECO:0000305" key="3"/>
<organism>
    <name type="scientific">Yersinia pestis</name>
    <dbReference type="NCBI Taxonomy" id="632"/>
    <lineage>
        <taxon>Bacteria</taxon>
        <taxon>Pseudomonadati</taxon>
        <taxon>Pseudomonadota</taxon>
        <taxon>Gammaproteobacteria</taxon>
        <taxon>Enterobacterales</taxon>
        <taxon>Yersiniaceae</taxon>
        <taxon>Yersinia</taxon>
    </lineage>
</organism>
<name>RLUE_YERPE</name>
<gene>
    <name type="primary">rluE</name>
    <name type="ordered locus">YPO1640</name>
    <name type="ordered locus">y1801</name>
    <name type="ordered locus">YP_1770</name>
</gene>
<dbReference type="EC" id="5.4.99.20"/>
<dbReference type="EMBL" id="AL590842">
    <property type="protein sequence ID" value="CAL20285.1"/>
    <property type="molecule type" value="Genomic_DNA"/>
</dbReference>
<dbReference type="EMBL" id="AE009952">
    <property type="protein sequence ID" value="AAM85369.1"/>
    <property type="molecule type" value="Genomic_DNA"/>
</dbReference>
<dbReference type="EMBL" id="AE017042">
    <property type="protein sequence ID" value="AAS61997.1"/>
    <property type="molecule type" value="Genomic_DNA"/>
</dbReference>
<dbReference type="PIR" id="AC0200">
    <property type="entry name" value="AC0200"/>
</dbReference>
<dbReference type="RefSeq" id="WP_002218214.1">
    <property type="nucleotide sequence ID" value="NZ_WUCM01000020.1"/>
</dbReference>
<dbReference type="RefSeq" id="YP_002346651.1">
    <property type="nucleotide sequence ID" value="NC_003143.1"/>
</dbReference>
<dbReference type="SMR" id="Q8ZFQ3"/>
<dbReference type="STRING" id="214092.YPO1640"/>
<dbReference type="PaxDb" id="214092-YPO1640"/>
<dbReference type="DNASU" id="1146748"/>
<dbReference type="EnsemblBacteria" id="AAS61997">
    <property type="protein sequence ID" value="AAS61997"/>
    <property type="gene ID" value="YP_1770"/>
</dbReference>
<dbReference type="GeneID" id="57976933"/>
<dbReference type="KEGG" id="ype:YPO1640"/>
<dbReference type="KEGG" id="ypk:y1801"/>
<dbReference type="KEGG" id="ypm:YP_1770"/>
<dbReference type="PATRIC" id="fig|214092.21.peg.1985"/>
<dbReference type="eggNOG" id="COG1187">
    <property type="taxonomic scope" value="Bacteria"/>
</dbReference>
<dbReference type="HOGENOM" id="CLU_024979_8_0_6"/>
<dbReference type="OMA" id="HPRTYWV"/>
<dbReference type="OrthoDB" id="9807213at2"/>
<dbReference type="Proteomes" id="UP000000815">
    <property type="component" value="Chromosome"/>
</dbReference>
<dbReference type="Proteomes" id="UP000001019">
    <property type="component" value="Chromosome"/>
</dbReference>
<dbReference type="Proteomes" id="UP000002490">
    <property type="component" value="Chromosome"/>
</dbReference>
<dbReference type="GO" id="GO:0160137">
    <property type="term" value="F:23S rRNA pseudouridine(2457) synthase activity"/>
    <property type="evidence" value="ECO:0007669"/>
    <property type="project" value="UniProtKB-EC"/>
</dbReference>
<dbReference type="GO" id="GO:0003723">
    <property type="term" value="F:RNA binding"/>
    <property type="evidence" value="ECO:0007669"/>
    <property type="project" value="InterPro"/>
</dbReference>
<dbReference type="GO" id="GO:0001522">
    <property type="term" value="P:pseudouridine synthesis"/>
    <property type="evidence" value="ECO:0007669"/>
    <property type="project" value="InterPro"/>
</dbReference>
<dbReference type="GO" id="GO:0006364">
    <property type="term" value="P:rRNA processing"/>
    <property type="evidence" value="ECO:0007669"/>
    <property type="project" value="UniProtKB-KW"/>
</dbReference>
<dbReference type="CDD" id="cd02566">
    <property type="entry name" value="PseudoU_synth_RluE"/>
    <property type="match status" value="1"/>
</dbReference>
<dbReference type="Gene3D" id="3.30.70.1560">
    <property type="entry name" value="Alpha-L RNA-binding motif"/>
    <property type="match status" value="1"/>
</dbReference>
<dbReference type="Gene3D" id="3.30.70.580">
    <property type="entry name" value="Pseudouridine synthase I, catalytic domain, N-terminal subdomain"/>
    <property type="match status" value="1"/>
</dbReference>
<dbReference type="InterPro" id="IPR042092">
    <property type="entry name" value="PsdUridine_s_RsuA/RluB/E/F_cat"/>
</dbReference>
<dbReference type="InterPro" id="IPR020103">
    <property type="entry name" value="PsdUridine_synth_cat_dom_sf"/>
</dbReference>
<dbReference type="InterPro" id="IPR006145">
    <property type="entry name" value="PsdUridine_synth_RsuA/RluA"/>
</dbReference>
<dbReference type="InterPro" id="IPR000748">
    <property type="entry name" value="PsdUridine_synth_RsuA/RluB/E/F"/>
</dbReference>
<dbReference type="InterPro" id="IPR018496">
    <property type="entry name" value="PsdUridine_synth_RsuA/RluB_CS"/>
</dbReference>
<dbReference type="InterPro" id="IPR050343">
    <property type="entry name" value="RsuA_PseudoU_synthase"/>
</dbReference>
<dbReference type="InterPro" id="IPR020094">
    <property type="entry name" value="TruA/RsuA/RluB/E/F_N"/>
</dbReference>
<dbReference type="NCBIfam" id="NF008487">
    <property type="entry name" value="PRK11394.1"/>
    <property type="match status" value="1"/>
</dbReference>
<dbReference type="NCBIfam" id="TIGR00093">
    <property type="entry name" value="pseudouridine synthase"/>
    <property type="match status" value="1"/>
</dbReference>
<dbReference type="PANTHER" id="PTHR47683">
    <property type="entry name" value="PSEUDOURIDINE SYNTHASE FAMILY PROTEIN-RELATED"/>
    <property type="match status" value="1"/>
</dbReference>
<dbReference type="PANTHER" id="PTHR47683:SF2">
    <property type="entry name" value="RNA-BINDING S4 DOMAIN-CONTAINING PROTEIN"/>
    <property type="match status" value="1"/>
</dbReference>
<dbReference type="Pfam" id="PF00849">
    <property type="entry name" value="PseudoU_synth_2"/>
    <property type="match status" value="1"/>
</dbReference>
<dbReference type="SUPFAM" id="SSF55120">
    <property type="entry name" value="Pseudouridine synthase"/>
    <property type="match status" value="1"/>
</dbReference>
<dbReference type="PROSITE" id="PS01149">
    <property type="entry name" value="PSI_RSU"/>
    <property type="match status" value="1"/>
</dbReference>
<reference key="1">
    <citation type="journal article" date="2001" name="Nature">
        <title>Genome sequence of Yersinia pestis, the causative agent of plague.</title>
        <authorList>
            <person name="Parkhill J."/>
            <person name="Wren B.W."/>
            <person name="Thomson N.R."/>
            <person name="Titball R.W."/>
            <person name="Holden M.T.G."/>
            <person name="Prentice M.B."/>
            <person name="Sebaihia M."/>
            <person name="James K.D."/>
            <person name="Churcher C.M."/>
            <person name="Mungall K.L."/>
            <person name="Baker S."/>
            <person name="Basham D."/>
            <person name="Bentley S.D."/>
            <person name="Brooks K."/>
            <person name="Cerdeno-Tarraga A.-M."/>
            <person name="Chillingworth T."/>
            <person name="Cronin A."/>
            <person name="Davies R.M."/>
            <person name="Davis P."/>
            <person name="Dougan G."/>
            <person name="Feltwell T."/>
            <person name="Hamlin N."/>
            <person name="Holroyd S."/>
            <person name="Jagels K."/>
            <person name="Karlyshev A.V."/>
            <person name="Leather S."/>
            <person name="Moule S."/>
            <person name="Oyston P.C.F."/>
            <person name="Quail M.A."/>
            <person name="Rutherford K.M."/>
            <person name="Simmonds M."/>
            <person name="Skelton J."/>
            <person name="Stevens K."/>
            <person name="Whitehead S."/>
            <person name="Barrell B.G."/>
        </authorList>
    </citation>
    <scope>NUCLEOTIDE SEQUENCE [LARGE SCALE GENOMIC DNA]</scope>
    <source>
        <strain>CO-92 / Biovar Orientalis</strain>
    </source>
</reference>
<reference key="2">
    <citation type="journal article" date="2002" name="J. Bacteriol.">
        <title>Genome sequence of Yersinia pestis KIM.</title>
        <authorList>
            <person name="Deng W."/>
            <person name="Burland V."/>
            <person name="Plunkett G. III"/>
            <person name="Boutin A."/>
            <person name="Mayhew G.F."/>
            <person name="Liss P."/>
            <person name="Perna N.T."/>
            <person name="Rose D.J."/>
            <person name="Mau B."/>
            <person name="Zhou S."/>
            <person name="Schwartz D.C."/>
            <person name="Fetherston J.D."/>
            <person name="Lindler L.E."/>
            <person name="Brubaker R.R."/>
            <person name="Plano G.V."/>
            <person name="Straley S.C."/>
            <person name="McDonough K.A."/>
            <person name="Nilles M.L."/>
            <person name="Matson J.S."/>
            <person name="Blattner F.R."/>
            <person name="Perry R.D."/>
        </authorList>
    </citation>
    <scope>NUCLEOTIDE SEQUENCE [LARGE SCALE GENOMIC DNA]</scope>
    <source>
        <strain>KIM10+ / Biovar Mediaevalis</strain>
    </source>
</reference>
<reference key="3">
    <citation type="journal article" date="2004" name="DNA Res.">
        <title>Complete genome sequence of Yersinia pestis strain 91001, an isolate avirulent to humans.</title>
        <authorList>
            <person name="Song Y."/>
            <person name="Tong Z."/>
            <person name="Wang J."/>
            <person name="Wang L."/>
            <person name="Guo Z."/>
            <person name="Han Y."/>
            <person name="Zhang J."/>
            <person name="Pei D."/>
            <person name="Zhou D."/>
            <person name="Qin H."/>
            <person name="Pang X."/>
            <person name="Han Y."/>
            <person name="Zhai J."/>
            <person name="Li M."/>
            <person name="Cui B."/>
            <person name="Qi Z."/>
            <person name="Jin L."/>
            <person name="Dai R."/>
            <person name="Chen F."/>
            <person name="Li S."/>
            <person name="Ye C."/>
            <person name="Du Z."/>
            <person name="Lin W."/>
            <person name="Wang J."/>
            <person name="Yu J."/>
            <person name="Yang H."/>
            <person name="Wang J."/>
            <person name="Huang P."/>
            <person name="Yang R."/>
        </authorList>
    </citation>
    <scope>NUCLEOTIDE SEQUENCE [LARGE SCALE GENOMIC DNA]</scope>
    <source>
        <strain>91001 / Biovar Mediaevalis</strain>
    </source>
</reference>
<protein>
    <recommendedName>
        <fullName>Ribosomal large subunit pseudouridine synthase E</fullName>
        <ecNumber>5.4.99.20</ecNumber>
    </recommendedName>
    <alternativeName>
        <fullName>rRNA pseudouridylate synthase E</fullName>
    </alternativeName>
    <alternativeName>
        <fullName>rRNA-uridine isomerase E</fullName>
    </alternativeName>
</protein>
<keyword id="KW-0413">Isomerase</keyword>
<keyword id="KW-1185">Reference proteome</keyword>
<keyword id="KW-0698">rRNA processing</keyword>
<feature type="chain" id="PRO_0000100015" description="Ribosomal large subunit pseudouridine synthase E">
    <location>
        <begin position="1"/>
        <end position="208"/>
    </location>
</feature>
<feature type="region of interest" description="Disordered" evidence="2">
    <location>
        <begin position="1"/>
        <end position="26"/>
    </location>
</feature>
<feature type="compositionally biased region" description="Basic residues" evidence="2">
    <location>
        <begin position="1"/>
        <end position="12"/>
    </location>
</feature>
<feature type="active site" description="Nucleophile" evidence="1">
    <location>
        <position position="69"/>
    </location>
</feature>